<name>CYB_GALFA</name>
<proteinExistence type="inferred from homology"/>
<keyword id="KW-0249">Electron transport</keyword>
<keyword id="KW-0349">Heme</keyword>
<keyword id="KW-0408">Iron</keyword>
<keyword id="KW-0472">Membrane</keyword>
<keyword id="KW-0479">Metal-binding</keyword>
<keyword id="KW-0496">Mitochondrion</keyword>
<keyword id="KW-0999">Mitochondrion inner membrane</keyword>
<keyword id="KW-0679">Respiratory chain</keyword>
<keyword id="KW-0812">Transmembrane</keyword>
<keyword id="KW-1133">Transmembrane helix</keyword>
<keyword id="KW-0813">Transport</keyword>
<keyword id="KW-0830">Ubiquinone</keyword>
<gene>
    <name type="primary">MT-CYB</name>
    <name type="synonym">COB</name>
    <name type="synonym">CYTB</name>
    <name type="synonym">MTCYB</name>
</gene>
<sequence>MTNIRKSHPLIKIINESFIDLPAPSNISAWWNFGSLLGVCLILQILTGLFLAMHYTSDTATAFSSVTHICRDVNYGWIIRYMHANGASMFFICLFMHIGRGMYYGSYTFSETWNIGILLLFAVMATAFMGYVLPWGQMSFWGATVITNLLSAIPYIGTNLVEWIWGGFSVDKATLTRFFAFHFILPFIIAALAAIHLLFLHETGSNNPSGLMSNSDKIPFHPYYTIKDILGLMFLILTLMLLVLFSPDLLGDPDNYTPANPLNTPPHIKPEWYFLFAYAILRSIPNKLGGVMALVLSILILAIVPLLHTSKQRSMMFRPLSQCLFWLLVADLLTLTWIGGQPVEHPFITIGQLASILYFSTILVLMPISGTIENRLLKW</sequence>
<geneLocation type="mitochondrion"/>
<evidence type="ECO:0000250" key="1"/>
<evidence type="ECO:0000250" key="2">
    <source>
        <dbReference type="UniProtKB" id="P00157"/>
    </source>
</evidence>
<evidence type="ECO:0000255" key="3">
    <source>
        <dbReference type="PROSITE-ProRule" id="PRU00967"/>
    </source>
</evidence>
<evidence type="ECO:0000255" key="4">
    <source>
        <dbReference type="PROSITE-ProRule" id="PRU00968"/>
    </source>
</evidence>
<comment type="function">
    <text evidence="2">Component of the ubiquinol-cytochrome c reductase complex (complex III or cytochrome b-c1 complex) that is part of the mitochondrial respiratory chain. The b-c1 complex mediates electron transfer from ubiquinol to cytochrome c. Contributes to the generation of a proton gradient across the mitochondrial membrane that is then used for ATP synthesis.</text>
</comment>
<comment type="cofactor">
    <cofactor evidence="2">
        <name>heme b</name>
        <dbReference type="ChEBI" id="CHEBI:60344"/>
    </cofactor>
    <text evidence="2">Binds 2 heme b groups non-covalently.</text>
</comment>
<comment type="subunit">
    <text evidence="2">The cytochrome bc1 complex contains 11 subunits: 3 respiratory subunits (MT-CYB, CYC1 and UQCRFS1), 2 core proteins (UQCRC1 and UQCRC2) and 6 low-molecular weight proteins (UQCRH/QCR6, UQCRB/QCR7, UQCRQ/QCR8, UQCR10/QCR9, UQCR11/QCR10 and a cleavage product of UQCRFS1). This cytochrome bc1 complex then forms a dimer.</text>
</comment>
<comment type="subcellular location">
    <subcellularLocation>
        <location evidence="2">Mitochondrion inner membrane</location>
        <topology evidence="2">Multi-pass membrane protein</topology>
    </subcellularLocation>
</comment>
<comment type="miscellaneous">
    <text evidence="1">Heme 1 (or BL or b562) is low-potential and absorbs at about 562 nm, and heme 2 (or BH or b566) is high-potential and absorbs at about 566 nm.</text>
</comment>
<comment type="similarity">
    <text evidence="3 4">Belongs to the cytochrome b family.</text>
</comment>
<comment type="caution">
    <text evidence="2">The full-length protein contains only eight transmembrane helices, not nine as predicted by bioinformatics tools.</text>
</comment>
<feature type="chain" id="PRO_0000060985" description="Cytochrome b">
    <location>
        <begin position="1"/>
        <end position="379"/>
    </location>
</feature>
<feature type="transmembrane region" description="Helical" evidence="2">
    <location>
        <begin position="33"/>
        <end position="53"/>
    </location>
</feature>
<feature type="transmembrane region" description="Helical" evidence="2">
    <location>
        <begin position="77"/>
        <end position="98"/>
    </location>
</feature>
<feature type="transmembrane region" description="Helical" evidence="2">
    <location>
        <begin position="113"/>
        <end position="133"/>
    </location>
</feature>
<feature type="transmembrane region" description="Helical" evidence="2">
    <location>
        <begin position="178"/>
        <end position="198"/>
    </location>
</feature>
<feature type="transmembrane region" description="Helical" evidence="2">
    <location>
        <begin position="226"/>
        <end position="246"/>
    </location>
</feature>
<feature type="transmembrane region" description="Helical" evidence="2">
    <location>
        <begin position="288"/>
        <end position="308"/>
    </location>
</feature>
<feature type="transmembrane region" description="Helical" evidence="2">
    <location>
        <begin position="320"/>
        <end position="340"/>
    </location>
</feature>
<feature type="transmembrane region" description="Helical" evidence="2">
    <location>
        <begin position="347"/>
        <end position="367"/>
    </location>
</feature>
<feature type="binding site" description="axial binding residue" evidence="2">
    <location>
        <position position="83"/>
    </location>
    <ligand>
        <name>heme b</name>
        <dbReference type="ChEBI" id="CHEBI:60344"/>
        <label>b562</label>
    </ligand>
    <ligandPart>
        <name>Fe</name>
        <dbReference type="ChEBI" id="CHEBI:18248"/>
    </ligandPart>
</feature>
<feature type="binding site" description="axial binding residue" evidence="2">
    <location>
        <position position="97"/>
    </location>
    <ligand>
        <name>heme b</name>
        <dbReference type="ChEBI" id="CHEBI:60344"/>
        <label>b566</label>
    </ligand>
    <ligandPart>
        <name>Fe</name>
        <dbReference type="ChEBI" id="CHEBI:18248"/>
    </ligandPart>
</feature>
<feature type="binding site" description="axial binding residue" evidence="2">
    <location>
        <position position="182"/>
    </location>
    <ligand>
        <name>heme b</name>
        <dbReference type="ChEBI" id="CHEBI:60344"/>
        <label>b562</label>
    </ligand>
    <ligandPart>
        <name>Fe</name>
        <dbReference type="ChEBI" id="CHEBI:18248"/>
    </ligandPart>
</feature>
<feature type="binding site" description="axial binding residue" evidence="2">
    <location>
        <position position="196"/>
    </location>
    <ligand>
        <name>heme b</name>
        <dbReference type="ChEBI" id="CHEBI:60344"/>
        <label>b566</label>
    </ligand>
    <ligandPart>
        <name>Fe</name>
        <dbReference type="ChEBI" id="CHEBI:18248"/>
    </ligandPart>
</feature>
<feature type="binding site" evidence="2">
    <location>
        <position position="201"/>
    </location>
    <ligand>
        <name>a ubiquinone</name>
        <dbReference type="ChEBI" id="CHEBI:16389"/>
    </ligand>
</feature>
<reference key="1">
    <citation type="journal article" date="2003" name="Nature">
        <title>Single origin of Malagasy Carnivora from an African ancestor.</title>
        <authorList>
            <person name="Yoder A.D."/>
            <person name="Burns M.M."/>
            <person name="Zehr S."/>
            <person name="Delefosse T."/>
            <person name="Veron G."/>
            <person name="Goodman S.M."/>
            <person name="Flynn J.J."/>
        </authorList>
    </citation>
    <scope>NUCLEOTIDE SEQUENCE [GENOMIC DNA]</scope>
    <source>
        <strain>Isolate SMG-7554</strain>
    </source>
</reference>
<accession>Q85PN8</accession>
<organism>
    <name type="scientific">Galidictis fasciata</name>
    <name type="common">Eastern Malagasy broad-striped mongoose</name>
    <dbReference type="NCBI Taxonomy" id="215636"/>
    <lineage>
        <taxon>Eukaryota</taxon>
        <taxon>Metazoa</taxon>
        <taxon>Chordata</taxon>
        <taxon>Craniata</taxon>
        <taxon>Vertebrata</taxon>
        <taxon>Euteleostomi</taxon>
        <taxon>Mammalia</taxon>
        <taxon>Eutheria</taxon>
        <taxon>Laurasiatheria</taxon>
        <taxon>Carnivora</taxon>
        <taxon>Feliformia</taxon>
        <taxon>Eupleridae</taxon>
        <taxon>Galidiinae</taxon>
        <taxon>Galidictis</taxon>
    </lineage>
</organism>
<dbReference type="EMBL" id="AY170100">
    <property type="protein sequence ID" value="AAN85619.1"/>
    <property type="molecule type" value="Genomic_DNA"/>
</dbReference>
<dbReference type="SMR" id="Q85PN8"/>
<dbReference type="GO" id="GO:0005743">
    <property type="term" value="C:mitochondrial inner membrane"/>
    <property type="evidence" value="ECO:0007669"/>
    <property type="project" value="UniProtKB-SubCell"/>
</dbReference>
<dbReference type="GO" id="GO:0045275">
    <property type="term" value="C:respiratory chain complex III"/>
    <property type="evidence" value="ECO:0007669"/>
    <property type="project" value="InterPro"/>
</dbReference>
<dbReference type="GO" id="GO:0046872">
    <property type="term" value="F:metal ion binding"/>
    <property type="evidence" value="ECO:0007669"/>
    <property type="project" value="UniProtKB-KW"/>
</dbReference>
<dbReference type="GO" id="GO:0008121">
    <property type="term" value="F:ubiquinol-cytochrome-c reductase activity"/>
    <property type="evidence" value="ECO:0007669"/>
    <property type="project" value="InterPro"/>
</dbReference>
<dbReference type="GO" id="GO:0006122">
    <property type="term" value="P:mitochondrial electron transport, ubiquinol to cytochrome c"/>
    <property type="evidence" value="ECO:0007669"/>
    <property type="project" value="TreeGrafter"/>
</dbReference>
<dbReference type="CDD" id="cd00290">
    <property type="entry name" value="cytochrome_b_C"/>
    <property type="match status" value="1"/>
</dbReference>
<dbReference type="CDD" id="cd00284">
    <property type="entry name" value="Cytochrome_b_N"/>
    <property type="match status" value="1"/>
</dbReference>
<dbReference type="FunFam" id="1.20.810.10:FF:000002">
    <property type="entry name" value="Cytochrome b"/>
    <property type="match status" value="1"/>
</dbReference>
<dbReference type="Gene3D" id="1.20.810.10">
    <property type="entry name" value="Cytochrome Bc1 Complex, Chain C"/>
    <property type="match status" value="1"/>
</dbReference>
<dbReference type="InterPro" id="IPR005798">
    <property type="entry name" value="Cyt_b/b6_C"/>
</dbReference>
<dbReference type="InterPro" id="IPR036150">
    <property type="entry name" value="Cyt_b/b6_C_sf"/>
</dbReference>
<dbReference type="InterPro" id="IPR005797">
    <property type="entry name" value="Cyt_b/b6_N"/>
</dbReference>
<dbReference type="InterPro" id="IPR027387">
    <property type="entry name" value="Cytb/b6-like_sf"/>
</dbReference>
<dbReference type="InterPro" id="IPR030689">
    <property type="entry name" value="Cytochrome_b"/>
</dbReference>
<dbReference type="InterPro" id="IPR048260">
    <property type="entry name" value="Cytochrome_b_C_euk/bac"/>
</dbReference>
<dbReference type="InterPro" id="IPR048259">
    <property type="entry name" value="Cytochrome_b_N_euk/bac"/>
</dbReference>
<dbReference type="InterPro" id="IPR016174">
    <property type="entry name" value="Di-haem_cyt_TM"/>
</dbReference>
<dbReference type="PANTHER" id="PTHR19271">
    <property type="entry name" value="CYTOCHROME B"/>
    <property type="match status" value="1"/>
</dbReference>
<dbReference type="PANTHER" id="PTHR19271:SF16">
    <property type="entry name" value="CYTOCHROME B"/>
    <property type="match status" value="1"/>
</dbReference>
<dbReference type="Pfam" id="PF00032">
    <property type="entry name" value="Cytochrom_B_C"/>
    <property type="match status" value="1"/>
</dbReference>
<dbReference type="Pfam" id="PF00033">
    <property type="entry name" value="Cytochrome_B"/>
    <property type="match status" value="1"/>
</dbReference>
<dbReference type="PIRSF" id="PIRSF038885">
    <property type="entry name" value="COB"/>
    <property type="match status" value="1"/>
</dbReference>
<dbReference type="SUPFAM" id="SSF81648">
    <property type="entry name" value="a domain/subunit of cytochrome bc1 complex (Ubiquinol-cytochrome c reductase)"/>
    <property type="match status" value="1"/>
</dbReference>
<dbReference type="SUPFAM" id="SSF81342">
    <property type="entry name" value="Transmembrane di-heme cytochromes"/>
    <property type="match status" value="1"/>
</dbReference>
<dbReference type="PROSITE" id="PS51003">
    <property type="entry name" value="CYTB_CTER"/>
    <property type="match status" value="1"/>
</dbReference>
<dbReference type="PROSITE" id="PS51002">
    <property type="entry name" value="CYTB_NTER"/>
    <property type="match status" value="1"/>
</dbReference>
<protein>
    <recommendedName>
        <fullName>Cytochrome b</fullName>
    </recommendedName>
    <alternativeName>
        <fullName>Complex III subunit 3</fullName>
    </alternativeName>
    <alternativeName>
        <fullName>Complex III subunit III</fullName>
    </alternativeName>
    <alternativeName>
        <fullName>Cytochrome b-c1 complex subunit 3</fullName>
    </alternativeName>
    <alternativeName>
        <fullName>Ubiquinol-cytochrome-c reductase complex cytochrome b subunit</fullName>
    </alternativeName>
</protein>